<gene>
    <name evidence="1" type="primary">purA</name>
    <name type="ordered locus">COXBURSA331_A0941</name>
</gene>
<dbReference type="EC" id="6.3.4.4" evidence="1"/>
<dbReference type="EMBL" id="CP000890">
    <property type="protein sequence ID" value="ABX77274.1"/>
    <property type="molecule type" value="Genomic_DNA"/>
</dbReference>
<dbReference type="RefSeq" id="WP_012220374.1">
    <property type="nucleotide sequence ID" value="NC_010117.1"/>
</dbReference>
<dbReference type="SMR" id="A9NCS8"/>
<dbReference type="KEGG" id="cbs:COXBURSA331_A0941"/>
<dbReference type="HOGENOM" id="CLU_029848_0_0_6"/>
<dbReference type="UniPathway" id="UPA00075">
    <property type="reaction ID" value="UER00335"/>
</dbReference>
<dbReference type="GO" id="GO:0005737">
    <property type="term" value="C:cytoplasm"/>
    <property type="evidence" value="ECO:0007669"/>
    <property type="project" value="UniProtKB-SubCell"/>
</dbReference>
<dbReference type="GO" id="GO:0004019">
    <property type="term" value="F:adenylosuccinate synthase activity"/>
    <property type="evidence" value="ECO:0007669"/>
    <property type="project" value="UniProtKB-UniRule"/>
</dbReference>
<dbReference type="GO" id="GO:0005525">
    <property type="term" value="F:GTP binding"/>
    <property type="evidence" value="ECO:0007669"/>
    <property type="project" value="UniProtKB-UniRule"/>
</dbReference>
<dbReference type="GO" id="GO:0000287">
    <property type="term" value="F:magnesium ion binding"/>
    <property type="evidence" value="ECO:0007669"/>
    <property type="project" value="UniProtKB-UniRule"/>
</dbReference>
<dbReference type="GO" id="GO:0044208">
    <property type="term" value="P:'de novo' AMP biosynthetic process"/>
    <property type="evidence" value="ECO:0007669"/>
    <property type="project" value="UniProtKB-UniRule"/>
</dbReference>
<dbReference type="GO" id="GO:0046040">
    <property type="term" value="P:IMP metabolic process"/>
    <property type="evidence" value="ECO:0007669"/>
    <property type="project" value="TreeGrafter"/>
</dbReference>
<dbReference type="CDD" id="cd03108">
    <property type="entry name" value="AdSS"/>
    <property type="match status" value="1"/>
</dbReference>
<dbReference type="FunFam" id="1.10.300.10:FF:000001">
    <property type="entry name" value="Adenylosuccinate synthetase"/>
    <property type="match status" value="1"/>
</dbReference>
<dbReference type="FunFam" id="3.90.170.10:FF:000001">
    <property type="entry name" value="Adenylosuccinate synthetase"/>
    <property type="match status" value="1"/>
</dbReference>
<dbReference type="Gene3D" id="3.40.440.10">
    <property type="entry name" value="Adenylosuccinate Synthetase, subunit A, domain 1"/>
    <property type="match status" value="1"/>
</dbReference>
<dbReference type="Gene3D" id="1.10.300.10">
    <property type="entry name" value="Adenylosuccinate Synthetase, subunit A, domain 2"/>
    <property type="match status" value="1"/>
</dbReference>
<dbReference type="Gene3D" id="3.90.170.10">
    <property type="entry name" value="Adenylosuccinate Synthetase, subunit A, domain 3"/>
    <property type="match status" value="1"/>
</dbReference>
<dbReference type="HAMAP" id="MF_00011">
    <property type="entry name" value="Adenylosucc_synth"/>
    <property type="match status" value="1"/>
</dbReference>
<dbReference type="InterPro" id="IPR018220">
    <property type="entry name" value="Adenylosuccin_syn_GTP-bd"/>
</dbReference>
<dbReference type="InterPro" id="IPR033128">
    <property type="entry name" value="Adenylosuccin_syn_Lys_AS"/>
</dbReference>
<dbReference type="InterPro" id="IPR042109">
    <property type="entry name" value="Adenylosuccinate_synth_dom1"/>
</dbReference>
<dbReference type="InterPro" id="IPR042110">
    <property type="entry name" value="Adenylosuccinate_synth_dom2"/>
</dbReference>
<dbReference type="InterPro" id="IPR042111">
    <property type="entry name" value="Adenylosuccinate_synth_dom3"/>
</dbReference>
<dbReference type="InterPro" id="IPR001114">
    <property type="entry name" value="Adenylosuccinate_synthetase"/>
</dbReference>
<dbReference type="InterPro" id="IPR027417">
    <property type="entry name" value="P-loop_NTPase"/>
</dbReference>
<dbReference type="NCBIfam" id="NF002223">
    <property type="entry name" value="PRK01117.1"/>
    <property type="match status" value="1"/>
</dbReference>
<dbReference type="NCBIfam" id="TIGR00184">
    <property type="entry name" value="purA"/>
    <property type="match status" value="1"/>
</dbReference>
<dbReference type="PANTHER" id="PTHR11846">
    <property type="entry name" value="ADENYLOSUCCINATE SYNTHETASE"/>
    <property type="match status" value="1"/>
</dbReference>
<dbReference type="PANTHER" id="PTHR11846:SF0">
    <property type="entry name" value="ADENYLOSUCCINATE SYNTHETASE"/>
    <property type="match status" value="1"/>
</dbReference>
<dbReference type="Pfam" id="PF00709">
    <property type="entry name" value="Adenylsucc_synt"/>
    <property type="match status" value="1"/>
</dbReference>
<dbReference type="SMART" id="SM00788">
    <property type="entry name" value="Adenylsucc_synt"/>
    <property type="match status" value="1"/>
</dbReference>
<dbReference type="SUPFAM" id="SSF52540">
    <property type="entry name" value="P-loop containing nucleoside triphosphate hydrolases"/>
    <property type="match status" value="1"/>
</dbReference>
<dbReference type="PROSITE" id="PS01266">
    <property type="entry name" value="ADENYLOSUCCIN_SYN_1"/>
    <property type="match status" value="1"/>
</dbReference>
<dbReference type="PROSITE" id="PS00513">
    <property type="entry name" value="ADENYLOSUCCIN_SYN_2"/>
    <property type="match status" value="1"/>
</dbReference>
<sequence length="435" mass="47971">MNIVILGTQWGDEGKGKIVDMLTEDVAAVVRFQGGHNAGHTLIIDGEKTILRLIPSGILREGVLCLIGNGVVLSPPALIEEIEELNAKGIPVTEQLRISSACNLLLPYHVALDKAREAELGTKAIGTTGRGIGPAYEDKVARRGIRAMDLLHPDQLLEKIKKATAYHNIQLEHYYHQTPLDYQSIYNQLMEFREKIKPMIGDVSALLGNLRRQNKHIIFEGAQGSLLDIDLGTYPYVTSSNTTAGSAATGSGFGPLYFDRVLGITKAYVTRVGAGPFPTELTNEEGKKMAKRGNEFGSVTGRPRRCGWFDVISMRRTIQINSLTGIVLTKLDVLDEFAKIHLCTAYRCDGEVVNEPPFDQSLLESCEPVYEEMPGWQTSTYGLTDYSEMPKEARNYISRLEELLGVPITIISTGPDRKHTIVRQAVFNQVITAKG</sequence>
<organism>
    <name type="scientific">Coxiella burnetii (strain RSA 331 / Henzerling II)</name>
    <dbReference type="NCBI Taxonomy" id="360115"/>
    <lineage>
        <taxon>Bacteria</taxon>
        <taxon>Pseudomonadati</taxon>
        <taxon>Pseudomonadota</taxon>
        <taxon>Gammaproteobacteria</taxon>
        <taxon>Legionellales</taxon>
        <taxon>Coxiellaceae</taxon>
        <taxon>Coxiella</taxon>
    </lineage>
</organism>
<keyword id="KW-0963">Cytoplasm</keyword>
<keyword id="KW-0342">GTP-binding</keyword>
<keyword id="KW-0436">Ligase</keyword>
<keyword id="KW-0460">Magnesium</keyword>
<keyword id="KW-0479">Metal-binding</keyword>
<keyword id="KW-0547">Nucleotide-binding</keyword>
<keyword id="KW-0658">Purine biosynthesis</keyword>
<accession>A9NCS8</accession>
<protein>
    <recommendedName>
        <fullName evidence="1">Adenylosuccinate synthetase</fullName>
        <shortName evidence="1">AMPSase</shortName>
        <shortName evidence="1">AdSS</shortName>
        <ecNumber evidence="1">6.3.4.4</ecNumber>
    </recommendedName>
    <alternativeName>
        <fullName evidence="1">IMP--aspartate ligase</fullName>
    </alternativeName>
</protein>
<feature type="chain" id="PRO_0000337001" description="Adenylosuccinate synthetase">
    <location>
        <begin position="1"/>
        <end position="435"/>
    </location>
</feature>
<feature type="active site" description="Proton acceptor" evidence="1">
    <location>
        <position position="12"/>
    </location>
</feature>
<feature type="active site" description="Proton donor" evidence="1">
    <location>
        <position position="40"/>
    </location>
</feature>
<feature type="binding site" evidence="1">
    <location>
        <begin position="11"/>
        <end position="17"/>
    </location>
    <ligand>
        <name>GTP</name>
        <dbReference type="ChEBI" id="CHEBI:37565"/>
    </ligand>
</feature>
<feature type="binding site" description="in other chain" evidence="1">
    <location>
        <begin position="12"/>
        <end position="15"/>
    </location>
    <ligand>
        <name>IMP</name>
        <dbReference type="ChEBI" id="CHEBI:58053"/>
        <note>ligand shared between dimeric partners</note>
    </ligand>
</feature>
<feature type="binding site" evidence="1">
    <location>
        <position position="12"/>
    </location>
    <ligand>
        <name>Mg(2+)</name>
        <dbReference type="ChEBI" id="CHEBI:18420"/>
    </ligand>
</feature>
<feature type="binding site" description="in other chain" evidence="1">
    <location>
        <begin position="37"/>
        <end position="40"/>
    </location>
    <ligand>
        <name>IMP</name>
        <dbReference type="ChEBI" id="CHEBI:58053"/>
        <note>ligand shared between dimeric partners</note>
    </ligand>
</feature>
<feature type="binding site" evidence="1">
    <location>
        <begin position="39"/>
        <end position="41"/>
    </location>
    <ligand>
        <name>GTP</name>
        <dbReference type="ChEBI" id="CHEBI:37565"/>
    </ligand>
</feature>
<feature type="binding site" evidence="1">
    <location>
        <position position="39"/>
    </location>
    <ligand>
        <name>Mg(2+)</name>
        <dbReference type="ChEBI" id="CHEBI:18420"/>
    </ligand>
</feature>
<feature type="binding site" description="in other chain" evidence="1">
    <location>
        <position position="128"/>
    </location>
    <ligand>
        <name>IMP</name>
        <dbReference type="ChEBI" id="CHEBI:58053"/>
        <note>ligand shared between dimeric partners</note>
    </ligand>
</feature>
<feature type="binding site" evidence="1">
    <location>
        <position position="142"/>
    </location>
    <ligand>
        <name>IMP</name>
        <dbReference type="ChEBI" id="CHEBI:58053"/>
        <note>ligand shared between dimeric partners</note>
    </ligand>
</feature>
<feature type="binding site" description="in other chain" evidence="1">
    <location>
        <position position="223"/>
    </location>
    <ligand>
        <name>IMP</name>
        <dbReference type="ChEBI" id="CHEBI:58053"/>
        <note>ligand shared between dimeric partners</note>
    </ligand>
</feature>
<feature type="binding site" description="in other chain" evidence="1">
    <location>
        <position position="238"/>
    </location>
    <ligand>
        <name>IMP</name>
        <dbReference type="ChEBI" id="CHEBI:58053"/>
        <note>ligand shared between dimeric partners</note>
    </ligand>
</feature>
<feature type="binding site" evidence="1">
    <location>
        <begin position="298"/>
        <end position="304"/>
    </location>
    <ligand>
        <name>substrate</name>
    </ligand>
</feature>
<feature type="binding site" description="in other chain" evidence="1">
    <location>
        <position position="302"/>
    </location>
    <ligand>
        <name>IMP</name>
        <dbReference type="ChEBI" id="CHEBI:58053"/>
        <note>ligand shared between dimeric partners</note>
    </ligand>
</feature>
<feature type="binding site" evidence="1">
    <location>
        <position position="304"/>
    </location>
    <ligand>
        <name>GTP</name>
        <dbReference type="ChEBI" id="CHEBI:37565"/>
    </ligand>
</feature>
<feature type="binding site" evidence="1">
    <location>
        <begin position="330"/>
        <end position="332"/>
    </location>
    <ligand>
        <name>GTP</name>
        <dbReference type="ChEBI" id="CHEBI:37565"/>
    </ligand>
</feature>
<feature type="binding site" evidence="1">
    <location>
        <begin position="412"/>
        <end position="414"/>
    </location>
    <ligand>
        <name>GTP</name>
        <dbReference type="ChEBI" id="CHEBI:37565"/>
    </ligand>
</feature>
<name>PURA_COXBR</name>
<proteinExistence type="inferred from homology"/>
<reference key="1">
    <citation type="submission" date="2007-11" db="EMBL/GenBank/DDBJ databases">
        <title>Genome sequencing of phylogenetically and phenotypically diverse Coxiella burnetii isolates.</title>
        <authorList>
            <person name="Seshadri R."/>
            <person name="Samuel J.E."/>
        </authorList>
    </citation>
    <scope>NUCLEOTIDE SEQUENCE [LARGE SCALE GENOMIC DNA]</scope>
    <source>
        <strain>RSA 331 / Henzerling II</strain>
    </source>
</reference>
<evidence type="ECO:0000255" key="1">
    <source>
        <dbReference type="HAMAP-Rule" id="MF_00011"/>
    </source>
</evidence>
<comment type="function">
    <text evidence="1">Plays an important role in the de novo pathway of purine nucleotide biosynthesis. Catalyzes the first committed step in the biosynthesis of AMP from IMP.</text>
</comment>
<comment type="catalytic activity">
    <reaction evidence="1">
        <text>IMP + L-aspartate + GTP = N(6)-(1,2-dicarboxyethyl)-AMP + GDP + phosphate + 2 H(+)</text>
        <dbReference type="Rhea" id="RHEA:15753"/>
        <dbReference type="ChEBI" id="CHEBI:15378"/>
        <dbReference type="ChEBI" id="CHEBI:29991"/>
        <dbReference type="ChEBI" id="CHEBI:37565"/>
        <dbReference type="ChEBI" id="CHEBI:43474"/>
        <dbReference type="ChEBI" id="CHEBI:57567"/>
        <dbReference type="ChEBI" id="CHEBI:58053"/>
        <dbReference type="ChEBI" id="CHEBI:58189"/>
        <dbReference type="EC" id="6.3.4.4"/>
    </reaction>
</comment>
<comment type="cofactor">
    <cofactor evidence="1">
        <name>Mg(2+)</name>
        <dbReference type="ChEBI" id="CHEBI:18420"/>
    </cofactor>
    <text evidence="1">Binds 1 Mg(2+) ion per subunit.</text>
</comment>
<comment type="pathway">
    <text evidence="1">Purine metabolism; AMP biosynthesis via de novo pathway; AMP from IMP: step 1/2.</text>
</comment>
<comment type="subunit">
    <text evidence="1">Homodimer.</text>
</comment>
<comment type="subcellular location">
    <subcellularLocation>
        <location evidence="1">Cytoplasm</location>
    </subcellularLocation>
</comment>
<comment type="similarity">
    <text evidence="1">Belongs to the adenylosuccinate synthetase family.</text>
</comment>